<proteinExistence type="inferred from homology"/>
<organism>
    <name type="scientific">Phytoplasma sp. (strain STRAWB2)</name>
    <dbReference type="NCBI Taxonomy" id="59890"/>
    <lineage>
        <taxon>Bacteria</taxon>
        <taxon>Bacillati</taxon>
        <taxon>Mycoplasmatota</taxon>
        <taxon>Mollicutes</taxon>
        <taxon>Acholeplasmatales</taxon>
        <taxon>Acholeplasmataceae</taxon>
        <taxon>Candidatus Phytoplasma</taxon>
    </lineage>
</organism>
<dbReference type="EMBL" id="U96617">
    <property type="protein sequence ID" value="AAC13665.1"/>
    <property type="molecule type" value="Genomic_DNA"/>
</dbReference>
<dbReference type="SMR" id="O66098"/>
<dbReference type="GO" id="GO:0022627">
    <property type="term" value="C:cytosolic small ribosomal subunit"/>
    <property type="evidence" value="ECO:0007669"/>
    <property type="project" value="TreeGrafter"/>
</dbReference>
<dbReference type="GO" id="GO:0003729">
    <property type="term" value="F:mRNA binding"/>
    <property type="evidence" value="ECO:0007669"/>
    <property type="project" value="UniProtKB-UniRule"/>
</dbReference>
<dbReference type="GO" id="GO:0019843">
    <property type="term" value="F:rRNA binding"/>
    <property type="evidence" value="ECO:0007669"/>
    <property type="project" value="UniProtKB-UniRule"/>
</dbReference>
<dbReference type="GO" id="GO:0003735">
    <property type="term" value="F:structural constituent of ribosome"/>
    <property type="evidence" value="ECO:0007669"/>
    <property type="project" value="InterPro"/>
</dbReference>
<dbReference type="GO" id="GO:0006412">
    <property type="term" value="P:translation"/>
    <property type="evidence" value="ECO:0007669"/>
    <property type="project" value="UniProtKB-UniRule"/>
</dbReference>
<dbReference type="CDD" id="cd02412">
    <property type="entry name" value="KH-II_30S_S3"/>
    <property type="match status" value="1"/>
</dbReference>
<dbReference type="FunFam" id="3.30.300.20:FF:000001">
    <property type="entry name" value="30S ribosomal protein S3"/>
    <property type="match status" value="1"/>
</dbReference>
<dbReference type="Gene3D" id="3.30.300.20">
    <property type="match status" value="1"/>
</dbReference>
<dbReference type="Gene3D" id="3.30.1140.32">
    <property type="entry name" value="Ribosomal protein S3, C-terminal domain"/>
    <property type="match status" value="1"/>
</dbReference>
<dbReference type="HAMAP" id="MF_01309_B">
    <property type="entry name" value="Ribosomal_uS3_B"/>
    <property type="match status" value="1"/>
</dbReference>
<dbReference type="InterPro" id="IPR004087">
    <property type="entry name" value="KH_dom"/>
</dbReference>
<dbReference type="InterPro" id="IPR015946">
    <property type="entry name" value="KH_dom-like_a/b"/>
</dbReference>
<dbReference type="InterPro" id="IPR004044">
    <property type="entry name" value="KH_dom_type_2"/>
</dbReference>
<dbReference type="InterPro" id="IPR009019">
    <property type="entry name" value="KH_sf_prok-type"/>
</dbReference>
<dbReference type="InterPro" id="IPR036419">
    <property type="entry name" value="Ribosomal_S3_C_sf"/>
</dbReference>
<dbReference type="InterPro" id="IPR005704">
    <property type="entry name" value="Ribosomal_uS3_bac-typ"/>
</dbReference>
<dbReference type="InterPro" id="IPR001351">
    <property type="entry name" value="Ribosomal_uS3_C"/>
</dbReference>
<dbReference type="InterPro" id="IPR018280">
    <property type="entry name" value="Ribosomal_uS3_CS"/>
</dbReference>
<dbReference type="NCBIfam" id="TIGR01009">
    <property type="entry name" value="rpsC_bact"/>
    <property type="match status" value="1"/>
</dbReference>
<dbReference type="PANTHER" id="PTHR11760">
    <property type="entry name" value="30S/40S RIBOSOMAL PROTEIN S3"/>
    <property type="match status" value="1"/>
</dbReference>
<dbReference type="PANTHER" id="PTHR11760:SF19">
    <property type="entry name" value="SMALL RIBOSOMAL SUBUNIT PROTEIN US3C"/>
    <property type="match status" value="1"/>
</dbReference>
<dbReference type="Pfam" id="PF07650">
    <property type="entry name" value="KH_2"/>
    <property type="match status" value="1"/>
</dbReference>
<dbReference type="Pfam" id="PF00189">
    <property type="entry name" value="Ribosomal_S3_C"/>
    <property type="match status" value="1"/>
</dbReference>
<dbReference type="SMART" id="SM00322">
    <property type="entry name" value="KH"/>
    <property type="match status" value="1"/>
</dbReference>
<dbReference type="SUPFAM" id="SSF54814">
    <property type="entry name" value="Prokaryotic type KH domain (KH-domain type II)"/>
    <property type="match status" value="1"/>
</dbReference>
<dbReference type="SUPFAM" id="SSF54821">
    <property type="entry name" value="Ribosomal protein S3 C-terminal domain"/>
    <property type="match status" value="1"/>
</dbReference>
<dbReference type="PROSITE" id="PS50823">
    <property type="entry name" value="KH_TYPE_2"/>
    <property type="match status" value="1"/>
</dbReference>
<dbReference type="PROSITE" id="PS00548">
    <property type="entry name" value="RIBOSOMAL_S3"/>
    <property type="match status" value="1"/>
</dbReference>
<accession>O66098</accession>
<protein>
    <recommendedName>
        <fullName evidence="1">Small ribosomal subunit protein uS3</fullName>
    </recommendedName>
    <alternativeName>
        <fullName evidence="3">30S ribosomal protein S3</fullName>
    </alternativeName>
</protein>
<sequence>MGQKTNPNGLRLGIIRTWESQWYVNDKEIPNLIKEDFLIRKLINNFAKKSAISQIDIERLKEKNKNRITIFVHTAKPGVIIGKDGDTRNKLVVKLKELTQKEVNLNVLEVKNSDKIALLIAQNMAEQLENRMFFRRVQKMAIQKALKAGAKGVKTLISGRLGGAEIARSEGHAEGRVPLHTLRADIDYAAVEAHTTYGVLGIKVWIFHGEVLPGQTILDTRKPFASQSSNTPNRRPRNFKGGNNNHVNAKKN</sequence>
<evidence type="ECO:0000255" key="1">
    <source>
        <dbReference type="HAMAP-Rule" id="MF_01309"/>
    </source>
</evidence>
<evidence type="ECO:0000256" key="2">
    <source>
        <dbReference type="SAM" id="MobiDB-lite"/>
    </source>
</evidence>
<evidence type="ECO:0000305" key="3"/>
<comment type="function">
    <text evidence="1">Binds the lower part of the 30S subunit head. Binds mRNA in the 70S ribosome, positioning it for translation.</text>
</comment>
<comment type="subunit">
    <text evidence="1">Part of the 30S ribosomal subunit. Forms a tight complex with proteins S10 and S14.</text>
</comment>
<comment type="similarity">
    <text evidence="1">Belongs to the universal ribosomal protein uS3 family.</text>
</comment>
<keyword id="KW-0687">Ribonucleoprotein</keyword>
<keyword id="KW-0689">Ribosomal protein</keyword>
<keyword id="KW-0694">RNA-binding</keyword>
<keyword id="KW-0699">rRNA-binding</keyword>
<reference key="1">
    <citation type="journal article" date="1998" name="Int. J. Syst. Bacteriol.">
        <title>Classification of new phytoplasmas associated with diseases of strawberry in Florida, based on analysis of 16S rRNA and ribosomal protein gene operon sequences.</title>
        <authorList>
            <person name="Jomantiene R."/>
            <person name="Davis R.E."/>
            <person name="Maas J."/>
            <person name="Dally E.L."/>
        </authorList>
    </citation>
    <scope>NUCLEOTIDE SEQUENCE [GENOMIC DNA]</scope>
</reference>
<name>RS3_PHYS2</name>
<gene>
    <name evidence="1" type="primary">rpsC</name>
    <name evidence="1" type="synonym">rps3</name>
</gene>
<feature type="chain" id="PRO_0000130172" description="Small ribosomal subunit protein uS3">
    <location>
        <begin position="1"/>
        <end position="252"/>
    </location>
</feature>
<feature type="domain" description="KH type-2" evidence="1">
    <location>
        <begin position="39"/>
        <end position="111"/>
    </location>
</feature>
<feature type="region of interest" description="Disordered" evidence="2">
    <location>
        <begin position="222"/>
        <end position="252"/>
    </location>
</feature>
<feature type="compositionally biased region" description="Polar residues" evidence="2">
    <location>
        <begin position="241"/>
        <end position="252"/>
    </location>
</feature>